<comment type="similarity">
    <text evidence="1">Belongs to the bacterial ribosomal protein bL33 family.</text>
</comment>
<accession>Q3MDJ2</accession>
<evidence type="ECO:0000255" key="1">
    <source>
        <dbReference type="HAMAP-Rule" id="MF_00294"/>
    </source>
</evidence>
<evidence type="ECO:0000305" key="2"/>
<sequence length="64" mass="7418">MAKSKGARIIVTLECTECRTNPDKRSPGVSRYTSTKNRRNTTNRLELKKFCTHCNKHTVHKEIK</sequence>
<protein>
    <recommendedName>
        <fullName evidence="1">Large ribosomal subunit protein bL33</fullName>
    </recommendedName>
    <alternativeName>
        <fullName evidence="2">50S ribosomal protein L33</fullName>
    </alternativeName>
</protein>
<gene>
    <name evidence="1" type="primary">rpmG</name>
    <name evidence="1" type="synonym">rpl33</name>
    <name type="ordered locus">Ava_1320</name>
</gene>
<proteinExistence type="inferred from homology"/>
<feature type="chain" id="PRO_1000004140" description="Large ribosomal subunit protein bL33">
    <location>
        <begin position="1"/>
        <end position="64"/>
    </location>
</feature>
<organism>
    <name type="scientific">Trichormus variabilis (strain ATCC 29413 / PCC 7937)</name>
    <name type="common">Anabaena variabilis</name>
    <dbReference type="NCBI Taxonomy" id="240292"/>
    <lineage>
        <taxon>Bacteria</taxon>
        <taxon>Bacillati</taxon>
        <taxon>Cyanobacteriota</taxon>
        <taxon>Cyanophyceae</taxon>
        <taxon>Nostocales</taxon>
        <taxon>Nostocaceae</taxon>
        <taxon>Trichormus</taxon>
    </lineage>
</organism>
<keyword id="KW-0687">Ribonucleoprotein</keyword>
<keyword id="KW-0689">Ribosomal protein</keyword>
<reference key="1">
    <citation type="journal article" date="2014" name="Stand. Genomic Sci.">
        <title>Complete genome sequence of Anabaena variabilis ATCC 29413.</title>
        <authorList>
            <person name="Thiel T."/>
            <person name="Pratte B.S."/>
            <person name="Zhong J."/>
            <person name="Goodwin L."/>
            <person name="Copeland A."/>
            <person name="Lucas S."/>
            <person name="Han C."/>
            <person name="Pitluck S."/>
            <person name="Land M.L."/>
            <person name="Kyrpides N.C."/>
            <person name="Woyke T."/>
        </authorList>
    </citation>
    <scope>NUCLEOTIDE SEQUENCE [LARGE SCALE GENOMIC DNA]</scope>
    <source>
        <strain>ATCC 29413 / PCC 7937</strain>
    </source>
</reference>
<name>RL33_TRIV2</name>
<dbReference type="EMBL" id="CP000117">
    <property type="protein sequence ID" value="ABA20944.1"/>
    <property type="molecule type" value="Genomic_DNA"/>
</dbReference>
<dbReference type="RefSeq" id="WP_010998585.1">
    <property type="nucleotide sequence ID" value="NC_007413.1"/>
</dbReference>
<dbReference type="STRING" id="240292.Ava_1320"/>
<dbReference type="GeneID" id="78220018"/>
<dbReference type="KEGG" id="ava:Ava_1320"/>
<dbReference type="eggNOG" id="COG0267">
    <property type="taxonomic scope" value="Bacteria"/>
</dbReference>
<dbReference type="HOGENOM" id="CLU_190949_3_0_3"/>
<dbReference type="Proteomes" id="UP000002533">
    <property type="component" value="Chromosome"/>
</dbReference>
<dbReference type="GO" id="GO:0005737">
    <property type="term" value="C:cytoplasm"/>
    <property type="evidence" value="ECO:0007669"/>
    <property type="project" value="UniProtKB-ARBA"/>
</dbReference>
<dbReference type="GO" id="GO:1990904">
    <property type="term" value="C:ribonucleoprotein complex"/>
    <property type="evidence" value="ECO:0007669"/>
    <property type="project" value="UniProtKB-KW"/>
</dbReference>
<dbReference type="GO" id="GO:0005840">
    <property type="term" value="C:ribosome"/>
    <property type="evidence" value="ECO:0007669"/>
    <property type="project" value="UniProtKB-KW"/>
</dbReference>
<dbReference type="GO" id="GO:0003735">
    <property type="term" value="F:structural constituent of ribosome"/>
    <property type="evidence" value="ECO:0007669"/>
    <property type="project" value="InterPro"/>
</dbReference>
<dbReference type="GO" id="GO:0006412">
    <property type="term" value="P:translation"/>
    <property type="evidence" value="ECO:0007669"/>
    <property type="project" value="UniProtKB-UniRule"/>
</dbReference>
<dbReference type="Gene3D" id="2.20.28.120">
    <property type="entry name" value="Ribosomal protein L33"/>
    <property type="match status" value="1"/>
</dbReference>
<dbReference type="HAMAP" id="MF_00294">
    <property type="entry name" value="Ribosomal_bL33"/>
    <property type="match status" value="1"/>
</dbReference>
<dbReference type="InterPro" id="IPR001705">
    <property type="entry name" value="Ribosomal_bL33"/>
</dbReference>
<dbReference type="InterPro" id="IPR018264">
    <property type="entry name" value="Ribosomal_bL33_CS"/>
</dbReference>
<dbReference type="InterPro" id="IPR038584">
    <property type="entry name" value="Ribosomal_bL33_sf"/>
</dbReference>
<dbReference type="InterPro" id="IPR011332">
    <property type="entry name" value="Ribosomal_zn-bd"/>
</dbReference>
<dbReference type="NCBIfam" id="NF001764">
    <property type="entry name" value="PRK00504.1"/>
    <property type="match status" value="1"/>
</dbReference>
<dbReference type="NCBIfam" id="NF001860">
    <property type="entry name" value="PRK00595.1"/>
    <property type="match status" value="1"/>
</dbReference>
<dbReference type="NCBIfam" id="TIGR01023">
    <property type="entry name" value="rpmG_bact"/>
    <property type="match status" value="1"/>
</dbReference>
<dbReference type="PANTHER" id="PTHR43168">
    <property type="entry name" value="50S RIBOSOMAL PROTEIN L33, CHLOROPLASTIC"/>
    <property type="match status" value="1"/>
</dbReference>
<dbReference type="PANTHER" id="PTHR43168:SF2">
    <property type="entry name" value="LARGE RIBOSOMAL SUBUNIT PROTEIN BL33C"/>
    <property type="match status" value="1"/>
</dbReference>
<dbReference type="Pfam" id="PF00471">
    <property type="entry name" value="Ribosomal_L33"/>
    <property type="match status" value="1"/>
</dbReference>
<dbReference type="SUPFAM" id="SSF57829">
    <property type="entry name" value="Zn-binding ribosomal proteins"/>
    <property type="match status" value="1"/>
</dbReference>
<dbReference type="PROSITE" id="PS00582">
    <property type="entry name" value="RIBOSOMAL_L33"/>
    <property type="match status" value="1"/>
</dbReference>